<gene>
    <name evidence="1" type="primary">gatB</name>
    <name type="ordered locus">GM21_3752</name>
</gene>
<comment type="function">
    <text evidence="1">Allows the formation of correctly charged Asn-tRNA(Asn) or Gln-tRNA(Gln) through the transamidation of misacylated Asp-tRNA(Asn) or Glu-tRNA(Gln) in organisms which lack either or both of asparaginyl-tRNA or glutaminyl-tRNA synthetases. The reaction takes place in the presence of glutamine and ATP through an activated phospho-Asp-tRNA(Asn) or phospho-Glu-tRNA(Gln).</text>
</comment>
<comment type="catalytic activity">
    <reaction evidence="1">
        <text>L-glutamyl-tRNA(Gln) + L-glutamine + ATP + H2O = L-glutaminyl-tRNA(Gln) + L-glutamate + ADP + phosphate + H(+)</text>
        <dbReference type="Rhea" id="RHEA:17521"/>
        <dbReference type="Rhea" id="RHEA-COMP:9681"/>
        <dbReference type="Rhea" id="RHEA-COMP:9684"/>
        <dbReference type="ChEBI" id="CHEBI:15377"/>
        <dbReference type="ChEBI" id="CHEBI:15378"/>
        <dbReference type="ChEBI" id="CHEBI:29985"/>
        <dbReference type="ChEBI" id="CHEBI:30616"/>
        <dbReference type="ChEBI" id="CHEBI:43474"/>
        <dbReference type="ChEBI" id="CHEBI:58359"/>
        <dbReference type="ChEBI" id="CHEBI:78520"/>
        <dbReference type="ChEBI" id="CHEBI:78521"/>
        <dbReference type="ChEBI" id="CHEBI:456216"/>
    </reaction>
</comment>
<comment type="catalytic activity">
    <reaction evidence="1">
        <text>L-aspartyl-tRNA(Asn) + L-glutamine + ATP + H2O = L-asparaginyl-tRNA(Asn) + L-glutamate + ADP + phosphate + 2 H(+)</text>
        <dbReference type="Rhea" id="RHEA:14513"/>
        <dbReference type="Rhea" id="RHEA-COMP:9674"/>
        <dbReference type="Rhea" id="RHEA-COMP:9677"/>
        <dbReference type="ChEBI" id="CHEBI:15377"/>
        <dbReference type="ChEBI" id="CHEBI:15378"/>
        <dbReference type="ChEBI" id="CHEBI:29985"/>
        <dbReference type="ChEBI" id="CHEBI:30616"/>
        <dbReference type="ChEBI" id="CHEBI:43474"/>
        <dbReference type="ChEBI" id="CHEBI:58359"/>
        <dbReference type="ChEBI" id="CHEBI:78515"/>
        <dbReference type="ChEBI" id="CHEBI:78516"/>
        <dbReference type="ChEBI" id="CHEBI:456216"/>
    </reaction>
</comment>
<comment type="subunit">
    <text evidence="1">Heterotrimer of A, B and C subunits.</text>
</comment>
<comment type="similarity">
    <text evidence="1">Belongs to the GatB/GatE family. GatB subfamily.</text>
</comment>
<name>GATB_GEOSM</name>
<organism>
    <name type="scientific">Geobacter sp. (strain M21)</name>
    <dbReference type="NCBI Taxonomy" id="443144"/>
    <lineage>
        <taxon>Bacteria</taxon>
        <taxon>Pseudomonadati</taxon>
        <taxon>Thermodesulfobacteriota</taxon>
        <taxon>Desulfuromonadia</taxon>
        <taxon>Geobacterales</taxon>
        <taxon>Geobacteraceae</taxon>
        <taxon>Geobacter</taxon>
    </lineage>
</organism>
<dbReference type="EC" id="6.3.5.-" evidence="1"/>
<dbReference type="EMBL" id="CP001661">
    <property type="protein sequence ID" value="ACT19771.1"/>
    <property type="molecule type" value="Genomic_DNA"/>
</dbReference>
<dbReference type="SMR" id="C6E6Z3"/>
<dbReference type="STRING" id="443144.GM21_3752"/>
<dbReference type="KEGG" id="gem:GM21_3752"/>
<dbReference type="eggNOG" id="COG0064">
    <property type="taxonomic scope" value="Bacteria"/>
</dbReference>
<dbReference type="HOGENOM" id="CLU_019240_0_0_7"/>
<dbReference type="OrthoDB" id="9804078at2"/>
<dbReference type="GO" id="GO:0050566">
    <property type="term" value="F:asparaginyl-tRNA synthase (glutamine-hydrolyzing) activity"/>
    <property type="evidence" value="ECO:0007669"/>
    <property type="project" value="RHEA"/>
</dbReference>
<dbReference type="GO" id="GO:0005524">
    <property type="term" value="F:ATP binding"/>
    <property type="evidence" value="ECO:0007669"/>
    <property type="project" value="UniProtKB-KW"/>
</dbReference>
<dbReference type="GO" id="GO:0050567">
    <property type="term" value="F:glutaminyl-tRNA synthase (glutamine-hydrolyzing) activity"/>
    <property type="evidence" value="ECO:0007669"/>
    <property type="project" value="UniProtKB-UniRule"/>
</dbReference>
<dbReference type="GO" id="GO:0070681">
    <property type="term" value="P:glutaminyl-tRNAGln biosynthesis via transamidation"/>
    <property type="evidence" value="ECO:0007669"/>
    <property type="project" value="TreeGrafter"/>
</dbReference>
<dbReference type="GO" id="GO:0006412">
    <property type="term" value="P:translation"/>
    <property type="evidence" value="ECO:0007669"/>
    <property type="project" value="UniProtKB-UniRule"/>
</dbReference>
<dbReference type="FunFam" id="1.10.10.410:FF:000001">
    <property type="entry name" value="Aspartyl/glutamyl-tRNA(Asn/Gln) amidotransferase subunit B"/>
    <property type="match status" value="1"/>
</dbReference>
<dbReference type="FunFam" id="1.10.150.380:FF:000001">
    <property type="entry name" value="Aspartyl/glutamyl-tRNA(Asn/Gln) amidotransferase subunit B"/>
    <property type="match status" value="1"/>
</dbReference>
<dbReference type="Gene3D" id="1.10.10.410">
    <property type="match status" value="1"/>
</dbReference>
<dbReference type="Gene3D" id="1.10.150.380">
    <property type="entry name" value="GatB domain, N-terminal subdomain"/>
    <property type="match status" value="1"/>
</dbReference>
<dbReference type="HAMAP" id="MF_00121">
    <property type="entry name" value="GatB"/>
    <property type="match status" value="1"/>
</dbReference>
<dbReference type="InterPro" id="IPR017959">
    <property type="entry name" value="Asn/Gln-tRNA_amidoTrfase_suB/E"/>
</dbReference>
<dbReference type="InterPro" id="IPR006075">
    <property type="entry name" value="Asn/Gln-tRNA_Trfase_suB/E_cat"/>
</dbReference>
<dbReference type="InterPro" id="IPR018027">
    <property type="entry name" value="Asn/Gln_amidotransferase"/>
</dbReference>
<dbReference type="InterPro" id="IPR003789">
    <property type="entry name" value="Asn/Gln_tRNA_amidoTrase-B-like"/>
</dbReference>
<dbReference type="InterPro" id="IPR004413">
    <property type="entry name" value="GatB"/>
</dbReference>
<dbReference type="InterPro" id="IPR042114">
    <property type="entry name" value="GatB_C_1"/>
</dbReference>
<dbReference type="InterPro" id="IPR023168">
    <property type="entry name" value="GatB_Yqey_C_2"/>
</dbReference>
<dbReference type="InterPro" id="IPR017958">
    <property type="entry name" value="Gln-tRNA_amidoTrfase_suB_CS"/>
</dbReference>
<dbReference type="InterPro" id="IPR014746">
    <property type="entry name" value="Gln_synth/guanido_kin_cat_dom"/>
</dbReference>
<dbReference type="NCBIfam" id="TIGR00133">
    <property type="entry name" value="gatB"/>
    <property type="match status" value="1"/>
</dbReference>
<dbReference type="NCBIfam" id="NF004012">
    <property type="entry name" value="PRK05477.1-2"/>
    <property type="match status" value="1"/>
</dbReference>
<dbReference type="NCBIfam" id="NF004014">
    <property type="entry name" value="PRK05477.1-4"/>
    <property type="match status" value="1"/>
</dbReference>
<dbReference type="NCBIfam" id="NF004015">
    <property type="entry name" value="PRK05477.1-5"/>
    <property type="match status" value="1"/>
</dbReference>
<dbReference type="PANTHER" id="PTHR11659">
    <property type="entry name" value="GLUTAMYL-TRNA GLN AMIDOTRANSFERASE SUBUNIT B MITOCHONDRIAL AND PROKARYOTIC PET112-RELATED"/>
    <property type="match status" value="1"/>
</dbReference>
<dbReference type="PANTHER" id="PTHR11659:SF0">
    <property type="entry name" value="GLUTAMYL-TRNA(GLN) AMIDOTRANSFERASE SUBUNIT B, MITOCHONDRIAL"/>
    <property type="match status" value="1"/>
</dbReference>
<dbReference type="Pfam" id="PF02934">
    <property type="entry name" value="GatB_N"/>
    <property type="match status" value="1"/>
</dbReference>
<dbReference type="Pfam" id="PF02637">
    <property type="entry name" value="GatB_Yqey"/>
    <property type="match status" value="1"/>
</dbReference>
<dbReference type="SMART" id="SM00845">
    <property type="entry name" value="GatB_Yqey"/>
    <property type="match status" value="1"/>
</dbReference>
<dbReference type="SUPFAM" id="SSF89095">
    <property type="entry name" value="GatB/YqeY motif"/>
    <property type="match status" value="1"/>
</dbReference>
<dbReference type="SUPFAM" id="SSF55931">
    <property type="entry name" value="Glutamine synthetase/guanido kinase"/>
    <property type="match status" value="1"/>
</dbReference>
<dbReference type="PROSITE" id="PS01234">
    <property type="entry name" value="GATB"/>
    <property type="match status" value="1"/>
</dbReference>
<proteinExistence type="inferred from homology"/>
<feature type="chain" id="PRO_1000203054" description="Aspartyl/glutamyl-tRNA(Asn/Gln) amidotransferase subunit B">
    <location>
        <begin position="1"/>
        <end position="479"/>
    </location>
</feature>
<evidence type="ECO:0000255" key="1">
    <source>
        <dbReference type="HAMAP-Rule" id="MF_00121"/>
    </source>
</evidence>
<keyword id="KW-0067">ATP-binding</keyword>
<keyword id="KW-0436">Ligase</keyword>
<keyword id="KW-0547">Nucleotide-binding</keyword>
<keyword id="KW-0648">Protein biosynthesis</keyword>
<accession>C6E6Z3</accession>
<reference key="1">
    <citation type="submission" date="2009-07" db="EMBL/GenBank/DDBJ databases">
        <title>Complete sequence of Geobacter sp. M21.</title>
        <authorList>
            <consortium name="US DOE Joint Genome Institute"/>
            <person name="Lucas S."/>
            <person name="Copeland A."/>
            <person name="Lapidus A."/>
            <person name="Glavina del Rio T."/>
            <person name="Dalin E."/>
            <person name="Tice H."/>
            <person name="Bruce D."/>
            <person name="Goodwin L."/>
            <person name="Pitluck S."/>
            <person name="Saunders E."/>
            <person name="Brettin T."/>
            <person name="Detter J.C."/>
            <person name="Han C."/>
            <person name="Larimer F."/>
            <person name="Land M."/>
            <person name="Hauser L."/>
            <person name="Kyrpides N."/>
            <person name="Ovchinnikova G."/>
            <person name="Lovley D."/>
        </authorList>
    </citation>
    <scope>NUCLEOTIDE SEQUENCE [LARGE SCALE GENOMIC DNA]</scope>
    <source>
        <strain>M21</strain>
    </source>
</reference>
<sequence length="479" mass="53327">MKYQVVIGLEVHTQLTTNTKIFCGCSTRFGAEPNSQTCPVCLGLPGALPVLNRQVVEYAIRAGLATNCSITQRNVFARKNYFYPDLPKGYQISQFDLPICQHGHLDIDLEGERKRIGITRIHMEEDAGKLVHADIPGVDDSCVDLNRACTPLLEIVSEPDMRSPDEAIAYLKKLHQIVMYLGICDGNLEEGSFRCDANVSLMPVGSNVFGTRAELKNINSFKFIKQAIEYEIERQAEILDDGGKVIQETRLFDPNTGTTRSMRGKEEAHDYRYFPDPDLVPVIISDDWIERVRGELPELPEAKRARFMSELSLPEYDAEVLAASRELAQYFEDTFALFPQAKTVSNWVMGEVTRALNDDNNRSIAECPVTPALLADLLKLMEKGTISGKIAKTVFDEMYKTGKAPEKIVEEKGLVQVSDTGAIEAMIDEVLEKNAGQVAEYRGGKETLFGFFVGQVMRASKGKANPGVVNEMLLKKLQG</sequence>
<protein>
    <recommendedName>
        <fullName evidence="1">Aspartyl/glutamyl-tRNA(Asn/Gln) amidotransferase subunit B</fullName>
        <shortName evidence="1">Asp/Glu-ADT subunit B</shortName>
        <ecNumber evidence="1">6.3.5.-</ecNumber>
    </recommendedName>
</protein>